<accession>A8Z3M4</accession>
<gene>
    <name evidence="1" type="primary">murD</name>
    <name type="ordered locus">USA300HOU_1123</name>
</gene>
<evidence type="ECO:0000255" key="1">
    <source>
        <dbReference type="HAMAP-Rule" id="MF_00639"/>
    </source>
</evidence>
<sequence>MLNYTGLENKNVLVVGLAKSGYEAAKLLSKLGANVTVNDGKDLSQDAHAKDLESMGISVVSGSHPLTLLDNNPIIVKNPGIPYTVSIIDEAVKRGLKILTEVELSYLISEAPIIAVTGTNGKTTVTSLIGDMFKKSRLTGRLSGNIGYVASKVAQEVKPTDYLVTELSSFQLLGIEKYKPHIAIITNIYSAHLDYHENLENYQNAKKQIYKNQTEEDYLICNYHQRQVIESEELKAKTLYFSTQQEVDGIYIKDGFIVYKGVRIINTEDLVLPGEHNLENILAAVLACILAGVPIKAIIDSLTTFSGIEHRLQYVGTNRTNKYYNDSKATNTLATQFALNSFNQPIIWLCGGLDRGNEFDELIPYMENVRAMVVFGQTKAKFAKLGNSQGKSVIEANNVEDAVDKVQDIIEPNDVVLLSPACASWDQYSTFEERGEKFIERFRAHLPSY</sequence>
<name>MURD_STAAT</name>
<proteinExistence type="inferred from homology"/>
<organism>
    <name type="scientific">Staphylococcus aureus (strain USA300 / TCH1516)</name>
    <dbReference type="NCBI Taxonomy" id="451516"/>
    <lineage>
        <taxon>Bacteria</taxon>
        <taxon>Bacillati</taxon>
        <taxon>Bacillota</taxon>
        <taxon>Bacilli</taxon>
        <taxon>Bacillales</taxon>
        <taxon>Staphylococcaceae</taxon>
        <taxon>Staphylococcus</taxon>
    </lineage>
</organism>
<reference key="1">
    <citation type="journal article" date="2007" name="BMC Microbiol.">
        <title>Subtle genetic changes enhance virulence of methicillin resistant and sensitive Staphylococcus aureus.</title>
        <authorList>
            <person name="Highlander S.K."/>
            <person name="Hulten K.G."/>
            <person name="Qin X."/>
            <person name="Jiang H."/>
            <person name="Yerrapragada S."/>
            <person name="Mason E.O. Jr."/>
            <person name="Shang Y."/>
            <person name="Williams T.M."/>
            <person name="Fortunov R.M."/>
            <person name="Liu Y."/>
            <person name="Igboeli O."/>
            <person name="Petrosino J."/>
            <person name="Tirumalai M."/>
            <person name="Uzman A."/>
            <person name="Fox G.E."/>
            <person name="Cardenas A.M."/>
            <person name="Muzny D.M."/>
            <person name="Hemphill L."/>
            <person name="Ding Y."/>
            <person name="Dugan S."/>
            <person name="Blyth P.R."/>
            <person name="Buhay C.J."/>
            <person name="Dinh H.H."/>
            <person name="Hawes A.C."/>
            <person name="Holder M."/>
            <person name="Kovar C.L."/>
            <person name="Lee S.L."/>
            <person name="Liu W."/>
            <person name="Nazareth L.V."/>
            <person name="Wang Q."/>
            <person name="Zhou J."/>
            <person name="Kaplan S.L."/>
            <person name="Weinstock G.M."/>
        </authorList>
    </citation>
    <scope>NUCLEOTIDE SEQUENCE [LARGE SCALE GENOMIC DNA]</scope>
    <source>
        <strain>USA300 / TCH1516</strain>
    </source>
</reference>
<dbReference type="EC" id="6.3.2.9" evidence="1"/>
<dbReference type="EMBL" id="CP000730">
    <property type="protein sequence ID" value="ABX29140.1"/>
    <property type="molecule type" value="Genomic_DNA"/>
</dbReference>
<dbReference type="RefSeq" id="WP_000935991.1">
    <property type="nucleotide sequence ID" value="NC_010079.1"/>
</dbReference>
<dbReference type="SMR" id="A8Z3M4"/>
<dbReference type="KEGG" id="sax:USA300HOU_1123"/>
<dbReference type="HOGENOM" id="CLU_032540_0_1_9"/>
<dbReference type="UniPathway" id="UPA00219"/>
<dbReference type="GO" id="GO:0005737">
    <property type="term" value="C:cytoplasm"/>
    <property type="evidence" value="ECO:0007669"/>
    <property type="project" value="UniProtKB-SubCell"/>
</dbReference>
<dbReference type="GO" id="GO:0005524">
    <property type="term" value="F:ATP binding"/>
    <property type="evidence" value="ECO:0007669"/>
    <property type="project" value="UniProtKB-UniRule"/>
</dbReference>
<dbReference type="GO" id="GO:0008764">
    <property type="term" value="F:UDP-N-acetylmuramoylalanine-D-glutamate ligase activity"/>
    <property type="evidence" value="ECO:0007669"/>
    <property type="project" value="UniProtKB-UniRule"/>
</dbReference>
<dbReference type="GO" id="GO:0051301">
    <property type="term" value="P:cell division"/>
    <property type="evidence" value="ECO:0007669"/>
    <property type="project" value="UniProtKB-KW"/>
</dbReference>
<dbReference type="GO" id="GO:0071555">
    <property type="term" value="P:cell wall organization"/>
    <property type="evidence" value="ECO:0007669"/>
    <property type="project" value="UniProtKB-KW"/>
</dbReference>
<dbReference type="GO" id="GO:0009252">
    <property type="term" value="P:peptidoglycan biosynthetic process"/>
    <property type="evidence" value="ECO:0007669"/>
    <property type="project" value="UniProtKB-UniRule"/>
</dbReference>
<dbReference type="GO" id="GO:0008360">
    <property type="term" value="P:regulation of cell shape"/>
    <property type="evidence" value="ECO:0007669"/>
    <property type="project" value="UniProtKB-KW"/>
</dbReference>
<dbReference type="Gene3D" id="3.90.190.20">
    <property type="entry name" value="Mur ligase, C-terminal domain"/>
    <property type="match status" value="1"/>
</dbReference>
<dbReference type="Gene3D" id="3.40.1190.10">
    <property type="entry name" value="Mur-like, catalytic domain"/>
    <property type="match status" value="1"/>
</dbReference>
<dbReference type="Gene3D" id="3.40.50.720">
    <property type="entry name" value="NAD(P)-binding Rossmann-like Domain"/>
    <property type="match status" value="1"/>
</dbReference>
<dbReference type="HAMAP" id="MF_00639">
    <property type="entry name" value="MurD"/>
    <property type="match status" value="1"/>
</dbReference>
<dbReference type="InterPro" id="IPR036565">
    <property type="entry name" value="Mur-like_cat_sf"/>
</dbReference>
<dbReference type="InterPro" id="IPR004101">
    <property type="entry name" value="Mur_ligase_C"/>
</dbReference>
<dbReference type="InterPro" id="IPR036615">
    <property type="entry name" value="Mur_ligase_C_dom_sf"/>
</dbReference>
<dbReference type="InterPro" id="IPR013221">
    <property type="entry name" value="Mur_ligase_cen"/>
</dbReference>
<dbReference type="InterPro" id="IPR005762">
    <property type="entry name" value="MurD"/>
</dbReference>
<dbReference type="NCBIfam" id="TIGR01087">
    <property type="entry name" value="murD"/>
    <property type="match status" value="1"/>
</dbReference>
<dbReference type="PANTHER" id="PTHR43692">
    <property type="entry name" value="UDP-N-ACETYLMURAMOYLALANINE--D-GLUTAMATE LIGASE"/>
    <property type="match status" value="1"/>
</dbReference>
<dbReference type="PANTHER" id="PTHR43692:SF1">
    <property type="entry name" value="UDP-N-ACETYLMURAMOYLALANINE--D-GLUTAMATE LIGASE"/>
    <property type="match status" value="1"/>
</dbReference>
<dbReference type="Pfam" id="PF02875">
    <property type="entry name" value="Mur_ligase_C"/>
    <property type="match status" value="1"/>
</dbReference>
<dbReference type="Pfam" id="PF08245">
    <property type="entry name" value="Mur_ligase_M"/>
    <property type="match status" value="1"/>
</dbReference>
<dbReference type="Pfam" id="PF21799">
    <property type="entry name" value="MurD-like_N"/>
    <property type="match status" value="1"/>
</dbReference>
<dbReference type="SUPFAM" id="SSF51984">
    <property type="entry name" value="MurCD N-terminal domain"/>
    <property type="match status" value="1"/>
</dbReference>
<dbReference type="SUPFAM" id="SSF53623">
    <property type="entry name" value="MurD-like peptide ligases, catalytic domain"/>
    <property type="match status" value="1"/>
</dbReference>
<dbReference type="SUPFAM" id="SSF53244">
    <property type="entry name" value="MurD-like peptide ligases, peptide-binding domain"/>
    <property type="match status" value="1"/>
</dbReference>
<feature type="chain" id="PRO_1000082694" description="UDP-N-acetylmuramoylalanine--D-glutamate ligase">
    <location>
        <begin position="1"/>
        <end position="449"/>
    </location>
</feature>
<feature type="binding site" evidence="1">
    <location>
        <begin position="118"/>
        <end position="124"/>
    </location>
    <ligand>
        <name>ATP</name>
        <dbReference type="ChEBI" id="CHEBI:30616"/>
    </ligand>
</feature>
<keyword id="KW-0067">ATP-binding</keyword>
<keyword id="KW-0131">Cell cycle</keyword>
<keyword id="KW-0132">Cell division</keyword>
<keyword id="KW-0133">Cell shape</keyword>
<keyword id="KW-0961">Cell wall biogenesis/degradation</keyword>
<keyword id="KW-0963">Cytoplasm</keyword>
<keyword id="KW-0436">Ligase</keyword>
<keyword id="KW-0547">Nucleotide-binding</keyword>
<keyword id="KW-0573">Peptidoglycan synthesis</keyword>
<comment type="function">
    <text evidence="1">Cell wall formation. Catalyzes the addition of glutamate to the nucleotide precursor UDP-N-acetylmuramoyl-L-alanine (UMA).</text>
</comment>
<comment type="catalytic activity">
    <reaction evidence="1">
        <text>UDP-N-acetyl-alpha-D-muramoyl-L-alanine + D-glutamate + ATP = UDP-N-acetyl-alpha-D-muramoyl-L-alanyl-D-glutamate + ADP + phosphate + H(+)</text>
        <dbReference type="Rhea" id="RHEA:16429"/>
        <dbReference type="ChEBI" id="CHEBI:15378"/>
        <dbReference type="ChEBI" id="CHEBI:29986"/>
        <dbReference type="ChEBI" id="CHEBI:30616"/>
        <dbReference type="ChEBI" id="CHEBI:43474"/>
        <dbReference type="ChEBI" id="CHEBI:83898"/>
        <dbReference type="ChEBI" id="CHEBI:83900"/>
        <dbReference type="ChEBI" id="CHEBI:456216"/>
        <dbReference type="EC" id="6.3.2.9"/>
    </reaction>
</comment>
<comment type="pathway">
    <text evidence="1">Cell wall biogenesis; peptidoglycan biosynthesis.</text>
</comment>
<comment type="subcellular location">
    <subcellularLocation>
        <location evidence="1">Cytoplasm</location>
    </subcellularLocation>
</comment>
<comment type="similarity">
    <text evidence="1">Belongs to the MurCDEF family.</text>
</comment>
<protein>
    <recommendedName>
        <fullName evidence="1">UDP-N-acetylmuramoylalanine--D-glutamate ligase</fullName>
        <ecNumber evidence="1">6.3.2.9</ecNumber>
    </recommendedName>
    <alternativeName>
        <fullName evidence="1">D-glutamic acid-adding enzyme</fullName>
    </alternativeName>
    <alternativeName>
        <fullName evidence="1">UDP-N-acetylmuramoyl-L-alanyl-D-glutamate synthetase</fullName>
    </alternativeName>
</protein>